<name>EX7S_GLUDA</name>
<organism>
    <name type="scientific">Gluconacetobacter diazotrophicus (strain ATCC 49037 / DSM 5601 / CCUG 37298 / CIP 103539 / LMG 7603 / PAl5)</name>
    <dbReference type="NCBI Taxonomy" id="272568"/>
    <lineage>
        <taxon>Bacteria</taxon>
        <taxon>Pseudomonadati</taxon>
        <taxon>Pseudomonadota</taxon>
        <taxon>Alphaproteobacteria</taxon>
        <taxon>Acetobacterales</taxon>
        <taxon>Acetobacteraceae</taxon>
        <taxon>Gluconacetobacter</taxon>
    </lineage>
</organism>
<accession>A9HIR6</accession>
<accession>B5ZJB1</accession>
<gene>
    <name evidence="1" type="primary">xseB</name>
    <name type="ordered locus">GDI1862</name>
    <name type="ordered locus">Gdia_0089</name>
</gene>
<proteinExistence type="inferred from homology"/>
<evidence type="ECO:0000255" key="1">
    <source>
        <dbReference type="HAMAP-Rule" id="MF_00337"/>
    </source>
</evidence>
<dbReference type="EC" id="3.1.11.6" evidence="1"/>
<dbReference type="EMBL" id="AM889285">
    <property type="protein sequence ID" value="CAP55805.1"/>
    <property type="molecule type" value="Genomic_DNA"/>
</dbReference>
<dbReference type="EMBL" id="CP001189">
    <property type="protein sequence ID" value="ACI49889.1"/>
    <property type="molecule type" value="Genomic_DNA"/>
</dbReference>
<dbReference type="RefSeq" id="WP_012225424.1">
    <property type="nucleotide sequence ID" value="NC_010125.1"/>
</dbReference>
<dbReference type="SMR" id="A9HIR6"/>
<dbReference type="STRING" id="272568.GDI1862"/>
<dbReference type="KEGG" id="gdi:GDI1862"/>
<dbReference type="KEGG" id="gdj:Gdia_0089"/>
<dbReference type="eggNOG" id="COG1722">
    <property type="taxonomic scope" value="Bacteria"/>
</dbReference>
<dbReference type="HOGENOM" id="CLU_145918_0_3_5"/>
<dbReference type="OrthoDB" id="9808145at2"/>
<dbReference type="Proteomes" id="UP000001176">
    <property type="component" value="Chromosome"/>
</dbReference>
<dbReference type="GO" id="GO:0005829">
    <property type="term" value="C:cytosol"/>
    <property type="evidence" value="ECO:0007669"/>
    <property type="project" value="TreeGrafter"/>
</dbReference>
<dbReference type="GO" id="GO:0009318">
    <property type="term" value="C:exodeoxyribonuclease VII complex"/>
    <property type="evidence" value="ECO:0007669"/>
    <property type="project" value="InterPro"/>
</dbReference>
<dbReference type="GO" id="GO:0008855">
    <property type="term" value="F:exodeoxyribonuclease VII activity"/>
    <property type="evidence" value="ECO:0007669"/>
    <property type="project" value="UniProtKB-UniRule"/>
</dbReference>
<dbReference type="GO" id="GO:0006308">
    <property type="term" value="P:DNA catabolic process"/>
    <property type="evidence" value="ECO:0007669"/>
    <property type="project" value="UniProtKB-UniRule"/>
</dbReference>
<dbReference type="Gene3D" id="1.10.287.1040">
    <property type="entry name" value="Exonuclease VII, small subunit"/>
    <property type="match status" value="1"/>
</dbReference>
<dbReference type="HAMAP" id="MF_00337">
    <property type="entry name" value="Exonuc_7_S"/>
    <property type="match status" value="1"/>
</dbReference>
<dbReference type="InterPro" id="IPR003761">
    <property type="entry name" value="Exonuc_VII_S"/>
</dbReference>
<dbReference type="InterPro" id="IPR037004">
    <property type="entry name" value="Exonuc_VII_ssu_sf"/>
</dbReference>
<dbReference type="NCBIfam" id="NF002139">
    <property type="entry name" value="PRK00977.1-3"/>
    <property type="match status" value="1"/>
</dbReference>
<dbReference type="NCBIfam" id="TIGR01280">
    <property type="entry name" value="xseB"/>
    <property type="match status" value="1"/>
</dbReference>
<dbReference type="PANTHER" id="PTHR34137">
    <property type="entry name" value="EXODEOXYRIBONUCLEASE 7 SMALL SUBUNIT"/>
    <property type="match status" value="1"/>
</dbReference>
<dbReference type="PANTHER" id="PTHR34137:SF1">
    <property type="entry name" value="EXODEOXYRIBONUCLEASE 7 SMALL SUBUNIT"/>
    <property type="match status" value="1"/>
</dbReference>
<dbReference type="Pfam" id="PF02609">
    <property type="entry name" value="Exonuc_VII_S"/>
    <property type="match status" value="1"/>
</dbReference>
<dbReference type="PIRSF" id="PIRSF006488">
    <property type="entry name" value="Exonuc_VII_S"/>
    <property type="match status" value="1"/>
</dbReference>
<dbReference type="SUPFAM" id="SSF116842">
    <property type="entry name" value="XseB-like"/>
    <property type="match status" value="1"/>
</dbReference>
<feature type="chain" id="PRO_1000079286" description="Exodeoxyribonuclease 7 small subunit">
    <location>
        <begin position="1"/>
        <end position="76"/>
    </location>
</feature>
<reference key="1">
    <citation type="journal article" date="2009" name="BMC Genomics">
        <title>Complete genome sequence of the sugarcane nitrogen-fixing endophyte Gluconacetobacter diazotrophicus Pal5.</title>
        <authorList>
            <person name="Bertalan M."/>
            <person name="Albano R."/>
            <person name="de Padua V."/>
            <person name="Rouws L."/>
            <person name="Rojas C."/>
            <person name="Hemerly A."/>
            <person name="Teixeira K."/>
            <person name="Schwab S."/>
            <person name="Araujo J."/>
            <person name="Oliveira A."/>
            <person name="Franca L."/>
            <person name="Magalhaes V."/>
            <person name="Alqueres S."/>
            <person name="Cardoso A."/>
            <person name="Almeida W."/>
            <person name="Loureiro M.M."/>
            <person name="Nogueira E."/>
            <person name="Cidade D."/>
            <person name="Oliveira D."/>
            <person name="Simao T."/>
            <person name="Macedo J."/>
            <person name="Valadao A."/>
            <person name="Dreschsel M."/>
            <person name="Freitas F."/>
            <person name="Vidal M."/>
            <person name="Guedes H."/>
            <person name="Rodrigues E."/>
            <person name="Meneses C."/>
            <person name="Brioso P."/>
            <person name="Pozzer L."/>
            <person name="Figueiredo D."/>
            <person name="Montano H."/>
            <person name="Junior J."/>
            <person name="de Souza Filho G."/>
            <person name="Martin Quintana Flores V."/>
            <person name="Ferreira B."/>
            <person name="Branco A."/>
            <person name="Gonzalez P."/>
            <person name="Guillobel H."/>
            <person name="Lemos M."/>
            <person name="Seibel L."/>
            <person name="Macedo J."/>
            <person name="Alves-Ferreira M."/>
            <person name="Sachetto-Martins G."/>
            <person name="Coelho A."/>
            <person name="Santos E."/>
            <person name="Amaral G."/>
            <person name="Neves A."/>
            <person name="Pacheco A.B."/>
            <person name="Carvalho D."/>
            <person name="Lery L."/>
            <person name="Bisch P."/>
            <person name="Rossle S.C."/>
            <person name="Urmenyi T."/>
            <person name="Rael Pereira A."/>
            <person name="Silva R."/>
            <person name="Rondinelli E."/>
            <person name="von Kruger W."/>
            <person name="Martins O."/>
            <person name="Baldani J.I."/>
            <person name="Ferreira P.C."/>
        </authorList>
    </citation>
    <scope>NUCLEOTIDE SEQUENCE [LARGE SCALE GENOMIC DNA]</scope>
    <source>
        <strain>ATCC 49037 / DSM 5601 / CCUG 37298 / CIP 103539 / LMG 7603 / PAl5</strain>
    </source>
</reference>
<reference key="2">
    <citation type="journal article" date="2010" name="Stand. Genomic Sci.">
        <title>Two genome sequences of the same bacterial strain, Gluconacetobacter diazotrophicus PAl 5, suggest a new standard in genome sequence submission.</title>
        <authorList>
            <person name="Giongo A."/>
            <person name="Tyler H.L."/>
            <person name="Zipperer U.N."/>
            <person name="Triplett E.W."/>
        </authorList>
    </citation>
    <scope>NUCLEOTIDE SEQUENCE [LARGE SCALE GENOMIC DNA]</scope>
    <source>
        <strain>ATCC 49037 / DSM 5601 / CCUG 37298 / CIP 103539 / LMG 7603 / PAl5</strain>
    </source>
</reference>
<keyword id="KW-0963">Cytoplasm</keyword>
<keyword id="KW-0269">Exonuclease</keyword>
<keyword id="KW-0378">Hydrolase</keyword>
<keyword id="KW-0540">Nuclease</keyword>
<keyword id="KW-1185">Reference proteome</keyword>
<comment type="function">
    <text evidence="1">Bidirectionally degrades single-stranded DNA into large acid-insoluble oligonucleotides, which are then degraded further into small acid-soluble oligonucleotides.</text>
</comment>
<comment type="catalytic activity">
    <reaction evidence="1">
        <text>Exonucleolytic cleavage in either 5'- to 3'- or 3'- to 5'-direction to yield nucleoside 5'-phosphates.</text>
        <dbReference type="EC" id="3.1.11.6"/>
    </reaction>
</comment>
<comment type="subunit">
    <text evidence="1">Heterooligomer composed of large and small subunits.</text>
</comment>
<comment type="subcellular location">
    <subcellularLocation>
        <location evidence="1">Cytoplasm</location>
    </subcellularLocation>
</comment>
<comment type="similarity">
    <text evidence="1">Belongs to the XseB family.</text>
</comment>
<sequence>MTEDLSQLSFEDALAQLEEIVRQLEGGQLRLQDAIASYERGAALRRYCDTKLNEADARVQAIIQRADGALETKSMD</sequence>
<protein>
    <recommendedName>
        <fullName evidence="1">Exodeoxyribonuclease 7 small subunit</fullName>
        <ecNumber evidence="1">3.1.11.6</ecNumber>
    </recommendedName>
    <alternativeName>
        <fullName evidence="1">Exodeoxyribonuclease VII small subunit</fullName>
        <shortName evidence="1">Exonuclease VII small subunit</shortName>
    </alternativeName>
</protein>